<comment type="function">
    <text evidence="1">Bifunctional enzyme that catalyzes both the deamination of dCTP to dUTP and the hydrolysis of dUTP to dUMP without releasing the toxic dUTP intermediate.</text>
</comment>
<comment type="catalytic activity">
    <reaction evidence="1">
        <text>dCTP + 2 H2O = dUMP + NH4(+) + diphosphate</text>
        <dbReference type="Rhea" id="RHEA:19205"/>
        <dbReference type="ChEBI" id="CHEBI:15377"/>
        <dbReference type="ChEBI" id="CHEBI:28938"/>
        <dbReference type="ChEBI" id="CHEBI:33019"/>
        <dbReference type="ChEBI" id="CHEBI:61481"/>
        <dbReference type="ChEBI" id="CHEBI:246422"/>
        <dbReference type="EC" id="3.5.4.30"/>
    </reaction>
</comment>
<comment type="pathway">
    <text evidence="1">Pyrimidine metabolism; dUMP biosynthesis; dUMP from dCTP: step 1/1.</text>
</comment>
<comment type="subunit">
    <text evidence="1">Homotrimer.</text>
</comment>
<comment type="similarity">
    <text evidence="1">Belongs to the dCTP deaminase family.</text>
</comment>
<feature type="chain" id="PRO_1000096421" description="dCTP deaminase, dUMP-forming">
    <location>
        <begin position="1"/>
        <end position="194"/>
    </location>
</feature>
<feature type="active site" description="Proton donor/acceptor" evidence="1">
    <location>
        <position position="132"/>
    </location>
</feature>
<feature type="binding site" evidence="1">
    <location>
        <begin position="104"/>
        <end position="109"/>
    </location>
    <ligand>
        <name>dCTP</name>
        <dbReference type="ChEBI" id="CHEBI:61481"/>
    </ligand>
</feature>
<feature type="binding site" evidence="1">
    <location>
        <position position="122"/>
    </location>
    <ligand>
        <name>dCTP</name>
        <dbReference type="ChEBI" id="CHEBI:61481"/>
    </ligand>
</feature>
<feature type="binding site" evidence="1">
    <location>
        <begin position="130"/>
        <end position="132"/>
    </location>
    <ligand>
        <name>dCTP</name>
        <dbReference type="ChEBI" id="CHEBI:61481"/>
    </ligand>
</feature>
<feature type="binding site" evidence="1">
    <location>
        <position position="151"/>
    </location>
    <ligand>
        <name>dCTP</name>
        <dbReference type="ChEBI" id="CHEBI:61481"/>
    </ligand>
</feature>
<feature type="binding site" evidence="1">
    <location>
        <position position="165"/>
    </location>
    <ligand>
        <name>dCTP</name>
        <dbReference type="ChEBI" id="CHEBI:61481"/>
    </ligand>
</feature>
<feature type="binding site" evidence="1">
    <location>
        <position position="172"/>
    </location>
    <ligand>
        <name>dCTP</name>
        <dbReference type="ChEBI" id="CHEBI:61481"/>
    </ligand>
</feature>
<feature type="binding site" evidence="1">
    <location>
        <position position="176"/>
    </location>
    <ligand>
        <name>dCTP</name>
        <dbReference type="ChEBI" id="CHEBI:61481"/>
    </ligand>
</feature>
<feature type="site" description="Important for bifunctional activity" evidence="1">
    <location>
        <begin position="119"/>
        <end position="120"/>
    </location>
</feature>
<gene>
    <name evidence="1" type="primary">dcd</name>
    <name type="ordered locus">DICTH_1754</name>
</gene>
<reference key="1">
    <citation type="journal article" date="2014" name="Genome Announc.">
        <title>Complete Genome Sequence of the Extreme Thermophile Dictyoglomus thermophilum H-6-12.</title>
        <authorList>
            <person name="Coil D.A."/>
            <person name="Badger J.H."/>
            <person name="Forberger H.C."/>
            <person name="Riggs F."/>
            <person name="Madupu R."/>
            <person name="Fedorova N."/>
            <person name="Ward N."/>
            <person name="Robb F.T."/>
            <person name="Eisen J.A."/>
        </authorList>
    </citation>
    <scope>NUCLEOTIDE SEQUENCE [LARGE SCALE GENOMIC DNA]</scope>
    <source>
        <strain>ATCC 35947 / DSM 3960 / H-6-12</strain>
    </source>
</reference>
<proteinExistence type="inferred from homology"/>
<accession>B5YB40</accession>
<dbReference type="EC" id="3.5.4.30" evidence="1"/>
<dbReference type="EMBL" id="CP001146">
    <property type="protein sequence ID" value="ACI19502.1"/>
    <property type="molecule type" value="Genomic_DNA"/>
</dbReference>
<dbReference type="RefSeq" id="WP_012548134.1">
    <property type="nucleotide sequence ID" value="NC_011297.1"/>
</dbReference>
<dbReference type="SMR" id="B5YB40"/>
<dbReference type="STRING" id="309799.DICTH_1754"/>
<dbReference type="PaxDb" id="309799-DICTH_1754"/>
<dbReference type="KEGG" id="dth:DICTH_1754"/>
<dbReference type="eggNOG" id="COG0717">
    <property type="taxonomic scope" value="Bacteria"/>
</dbReference>
<dbReference type="HOGENOM" id="CLU_087476_2_1_0"/>
<dbReference type="OrthoDB" id="9780202at2"/>
<dbReference type="UniPathway" id="UPA00610">
    <property type="reaction ID" value="UER00667"/>
</dbReference>
<dbReference type="Proteomes" id="UP000001733">
    <property type="component" value="Chromosome"/>
</dbReference>
<dbReference type="GO" id="GO:0033973">
    <property type="term" value="F:dCTP deaminase (dUMP-forming) activity"/>
    <property type="evidence" value="ECO:0007669"/>
    <property type="project" value="UniProtKB-UniRule"/>
</dbReference>
<dbReference type="GO" id="GO:0008829">
    <property type="term" value="F:dCTP deaminase activity"/>
    <property type="evidence" value="ECO:0007669"/>
    <property type="project" value="InterPro"/>
</dbReference>
<dbReference type="GO" id="GO:0000166">
    <property type="term" value="F:nucleotide binding"/>
    <property type="evidence" value="ECO:0007669"/>
    <property type="project" value="UniProtKB-KW"/>
</dbReference>
<dbReference type="GO" id="GO:0006226">
    <property type="term" value="P:dUMP biosynthetic process"/>
    <property type="evidence" value="ECO:0007669"/>
    <property type="project" value="UniProtKB-UniRule"/>
</dbReference>
<dbReference type="GO" id="GO:0006229">
    <property type="term" value="P:dUTP biosynthetic process"/>
    <property type="evidence" value="ECO:0007669"/>
    <property type="project" value="InterPro"/>
</dbReference>
<dbReference type="GO" id="GO:0015949">
    <property type="term" value="P:nucleobase-containing small molecule interconversion"/>
    <property type="evidence" value="ECO:0007669"/>
    <property type="project" value="TreeGrafter"/>
</dbReference>
<dbReference type="CDD" id="cd07557">
    <property type="entry name" value="trimeric_dUTPase"/>
    <property type="match status" value="1"/>
</dbReference>
<dbReference type="FunFam" id="2.70.40.10:FF:000005">
    <property type="entry name" value="dCTP deaminase, dUMP-forming"/>
    <property type="match status" value="1"/>
</dbReference>
<dbReference type="Gene3D" id="2.70.40.10">
    <property type="match status" value="1"/>
</dbReference>
<dbReference type="HAMAP" id="MF_00146">
    <property type="entry name" value="dCTP_deaminase"/>
    <property type="match status" value="1"/>
</dbReference>
<dbReference type="InterPro" id="IPR011962">
    <property type="entry name" value="dCTP_deaminase"/>
</dbReference>
<dbReference type="InterPro" id="IPR036157">
    <property type="entry name" value="dUTPase-like_sf"/>
</dbReference>
<dbReference type="InterPro" id="IPR033704">
    <property type="entry name" value="dUTPase_trimeric"/>
</dbReference>
<dbReference type="NCBIfam" id="TIGR02274">
    <property type="entry name" value="dCTP_deam"/>
    <property type="match status" value="1"/>
</dbReference>
<dbReference type="PANTHER" id="PTHR42680">
    <property type="entry name" value="DCTP DEAMINASE"/>
    <property type="match status" value="1"/>
</dbReference>
<dbReference type="PANTHER" id="PTHR42680:SF3">
    <property type="entry name" value="DCTP DEAMINASE"/>
    <property type="match status" value="1"/>
</dbReference>
<dbReference type="Pfam" id="PF22769">
    <property type="entry name" value="DCD"/>
    <property type="match status" value="1"/>
</dbReference>
<dbReference type="SUPFAM" id="SSF51283">
    <property type="entry name" value="dUTPase-like"/>
    <property type="match status" value="1"/>
</dbReference>
<name>DCDB_DICT6</name>
<sequence>MILSDRDIKKYLEEGKLVIHPIDDPQKQIQPSSVDLRLGNSFLHFKVEGRAYIDPTQDSPQELMEIIEIEEGKPFFLRPGEFVLGTTIETVKLPDDLVARVDGRSSLGRLGIIVHATAGYVDPGFCGQITLELSNINRVPVALYPGMRICQISFYKLSSPAETPYYKKAGSKYHNQKGPTASRLNIDFCKKEEK</sequence>
<keyword id="KW-0378">Hydrolase</keyword>
<keyword id="KW-0546">Nucleotide metabolism</keyword>
<keyword id="KW-0547">Nucleotide-binding</keyword>
<organism>
    <name type="scientific">Dictyoglomus thermophilum (strain ATCC 35947 / DSM 3960 / H-6-12)</name>
    <dbReference type="NCBI Taxonomy" id="309799"/>
    <lineage>
        <taxon>Bacteria</taxon>
        <taxon>Pseudomonadati</taxon>
        <taxon>Dictyoglomota</taxon>
        <taxon>Dictyoglomia</taxon>
        <taxon>Dictyoglomales</taxon>
        <taxon>Dictyoglomaceae</taxon>
        <taxon>Dictyoglomus</taxon>
    </lineage>
</organism>
<evidence type="ECO:0000255" key="1">
    <source>
        <dbReference type="HAMAP-Rule" id="MF_00146"/>
    </source>
</evidence>
<protein>
    <recommendedName>
        <fullName evidence="1">dCTP deaminase, dUMP-forming</fullName>
        <ecNumber evidence="1">3.5.4.30</ecNumber>
    </recommendedName>
    <alternativeName>
        <fullName evidence="1">Bifunctional dCTP deaminase:dUTPase</fullName>
    </alternativeName>
    <alternativeName>
        <fullName evidence="1">DCD-DUT</fullName>
    </alternativeName>
</protein>